<dbReference type="EMBL" id="AK124901">
    <property type="protein sequence ID" value="BAC85987.1"/>
    <property type="status" value="ALT_INIT"/>
    <property type="molecule type" value="mRNA"/>
</dbReference>
<dbReference type="EMBL" id="AK127303">
    <property type="protein sequence ID" value="BAC86925.1"/>
    <property type="status" value="ALT_FRAME"/>
    <property type="molecule type" value="mRNA"/>
</dbReference>
<dbReference type="EMBL" id="AL353146">
    <property type="status" value="NOT_ANNOTATED_CDS"/>
    <property type="molecule type" value="Genomic_DNA"/>
</dbReference>
<dbReference type="EMBL" id="BC086873">
    <property type="protein sequence ID" value="AAH86873.1"/>
    <property type="molecule type" value="mRNA"/>
</dbReference>
<dbReference type="CCDS" id="CCDS7404.2"/>
<dbReference type="RefSeq" id="NP_998771.3">
    <property type="nucleotide sequence ID" value="NM_213606.4"/>
</dbReference>
<dbReference type="RefSeq" id="XP_016871726.1">
    <property type="nucleotide sequence ID" value="XM_017016237.3"/>
</dbReference>
<dbReference type="RefSeq" id="XP_016871727.1">
    <property type="nucleotide sequence ID" value="XM_017016238.2"/>
</dbReference>
<dbReference type="RefSeq" id="XP_016871728.1">
    <property type="nucleotide sequence ID" value="XM_017016239.2"/>
</dbReference>
<dbReference type="RefSeq" id="XP_047281177.1">
    <property type="nucleotide sequence ID" value="XM_047425221.1"/>
</dbReference>
<dbReference type="RefSeq" id="XP_047281178.1">
    <property type="nucleotide sequence ID" value="XM_047425222.1"/>
</dbReference>
<dbReference type="RefSeq" id="XP_047281179.1">
    <property type="nucleotide sequence ID" value="XM_047425223.1"/>
</dbReference>
<dbReference type="SMR" id="Q6ZSM3"/>
<dbReference type="BioGRID" id="132399">
    <property type="interactions" value="5"/>
</dbReference>
<dbReference type="FunCoup" id="Q6ZSM3">
    <property type="interactions" value="173"/>
</dbReference>
<dbReference type="IntAct" id="Q6ZSM3">
    <property type="interactions" value="4"/>
</dbReference>
<dbReference type="STRING" id="9606.ENSP00000360855"/>
<dbReference type="TCDB" id="2.A.1.13.14">
    <property type="family name" value="the major facilitator superfamily (mfs)"/>
</dbReference>
<dbReference type="iPTMnet" id="Q6ZSM3"/>
<dbReference type="PhosphoSitePlus" id="Q6ZSM3"/>
<dbReference type="BioMuta" id="SLC16A12"/>
<dbReference type="DMDM" id="147704293"/>
<dbReference type="MassIVE" id="Q6ZSM3"/>
<dbReference type="PaxDb" id="9606-ENSP00000360855"/>
<dbReference type="PeptideAtlas" id="Q6ZSM3"/>
<dbReference type="Antibodypedia" id="16234">
    <property type="antibodies" value="120 antibodies from 24 providers"/>
</dbReference>
<dbReference type="DNASU" id="387700"/>
<dbReference type="Ensembl" id="ENST00000371790.5">
    <property type="protein sequence ID" value="ENSP00000360855.4"/>
    <property type="gene ID" value="ENSG00000152779.14"/>
</dbReference>
<dbReference type="GeneID" id="387700"/>
<dbReference type="KEGG" id="hsa:387700"/>
<dbReference type="MANE-Select" id="ENST00000371790.5">
    <property type="protein sequence ID" value="ENSP00000360855.4"/>
    <property type="RefSeq nucleotide sequence ID" value="NM_213606.4"/>
    <property type="RefSeq protein sequence ID" value="NP_998771.3"/>
</dbReference>
<dbReference type="AGR" id="HGNC:23094"/>
<dbReference type="CTD" id="387700"/>
<dbReference type="DisGeNET" id="387700"/>
<dbReference type="GeneCards" id="SLC16A12"/>
<dbReference type="HGNC" id="HGNC:23094">
    <property type="gene designation" value="SLC16A12"/>
</dbReference>
<dbReference type="HPA" id="ENSG00000152779">
    <property type="expression patterns" value="Tissue enhanced (choroid plexus, epididymis, kidney)"/>
</dbReference>
<dbReference type="MalaCards" id="SLC16A12"/>
<dbReference type="MIM" id="611910">
    <property type="type" value="gene"/>
</dbReference>
<dbReference type="MIM" id="612018">
    <property type="type" value="phenotype"/>
</dbReference>
<dbReference type="neXtProt" id="NX_Q6ZSM3"/>
<dbReference type="OpenTargets" id="ENSG00000152779"/>
<dbReference type="Orphanet" id="247794">
    <property type="disease" value="Juvenile cataract-microcornea-renal glucosuria syndrome"/>
</dbReference>
<dbReference type="PharmGKB" id="PA134969386"/>
<dbReference type="VEuPathDB" id="HostDB:ENSG00000152779"/>
<dbReference type="eggNOG" id="KOG2504">
    <property type="taxonomic scope" value="Eukaryota"/>
</dbReference>
<dbReference type="GeneTree" id="ENSGT00940000156169"/>
<dbReference type="HOGENOM" id="CLU_001265_59_1_1"/>
<dbReference type="InParanoid" id="Q6ZSM3"/>
<dbReference type="OMA" id="WVLASHQ"/>
<dbReference type="OrthoDB" id="410267at2759"/>
<dbReference type="PAN-GO" id="Q6ZSM3">
    <property type="GO annotations" value="3 GO annotations based on evolutionary models"/>
</dbReference>
<dbReference type="PhylomeDB" id="Q6ZSM3"/>
<dbReference type="TreeFam" id="TF313792"/>
<dbReference type="PathwayCommons" id="Q6ZSM3"/>
<dbReference type="SignaLink" id="Q6ZSM3"/>
<dbReference type="BioGRID-ORCS" id="387700">
    <property type="hits" value="8 hits in 1138 CRISPR screens"/>
</dbReference>
<dbReference type="ChiTaRS" id="SLC16A12">
    <property type="organism name" value="human"/>
</dbReference>
<dbReference type="GenomeRNAi" id="387700"/>
<dbReference type="Pharos" id="Q6ZSM3">
    <property type="development level" value="Tbio"/>
</dbReference>
<dbReference type="PRO" id="PR:Q6ZSM3"/>
<dbReference type="Proteomes" id="UP000005640">
    <property type="component" value="Chromosome 10"/>
</dbReference>
<dbReference type="RNAct" id="Q6ZSM3">
    <property type="molecule type" value="protein"/>
</dbReference>
<dbReference type="Bgee" id="ENSG00000152779">
    <property type="expression patterns" value="Expressed in body of pancreas and 93 other cell types or tissues"/>
</dbReference>
<dbReference type="ExpressionAtlas" id="Q6ZSM3">
    <property type="expression patterns" value="baseline and differential"/>
</dbReference>
<dbReference type="GO" id="GO:0016323">
    <property type="term" value="C:basolateral plasma membrane"/>
    <property type="evidence" value="ECO:0000250"/>
    <property type="project" value="UniProtKB"/>
</dbReference>
<dbReference type="GO" id="GO:0005886">
    <property type="term" value="C:plasma membrane"/>
    <property type="evidence" value="ECO:0000314"/>
    <property type="project" value="UniProtKB"/>
</dbReference>
<dbReference type="GO" id="GO:0005308">
    <property type="term" value="F:creatine transmembrane transporter activity"/>
    <property type="evidence" value="ECO:0000314"/>
    <property type="project" value="UniProtKB"/>
</dbReference>
<dbReference type="GO" id="GO:0022857">
    <property type="term" value="F:transmembrane transporter activity"/>
    <property type="evidence" value="ECO:0000318"/>
    <property type="project" value="GO_Central"/>
</dbReference>
<dbReference type="GO" id="GO:0015292">
    <property type="term" value="F:uniporter activity"/>
    <property type="evidence" value="ECO:0000314"/>
    <property type="project" value="UniProtKB"/>
</dbReference>
<dbReference type="GO" id="GO:0015881">
    <property type="term" value="P:creatine transmembrane transport"/>
    <property type="evidence" value="ECO:0000314"/>
    <property type="project" value="UniProtKB"/>
</dbReference>
<dbReference type="GO" id="GO:0046449">
    <property type="term" value="P:creatinine metabolic process"/>
    <property type="evidence" value="ECO:0007669"/>
    <property type="project" value="Ensembl"/>
</dbReference>
<dbReference type="GO" id="GO:0150104">
    <property type="term" value="P:transport across blood-brain barrier"/>
    <property type="evidence" value="ECO:0000303"/>
    <property type="project" value="ARUK-UCL"/>
</dbReference>
<dbReference type="CDD" id="cd17424">
    <property type="entry name" value="MFS_MCT12"/>
    <property type="match status" value="1"/>
</dbReference>
<dbReference type="FunFam" id="1.20.1250.20:FF:000128">
    <property type="entry name" value="monocarboxylate transporter 12 isoform X1"/>
    <property type="match status" value="1"/>
</dbReference>
<dbReference type="FunFam" id="1.20.1250.20:FF:000160">
    <property type="entry name" value="monocarboxylate transporter 12 isoform X1"/>
    <property type="match status" value="1"/>
</dbReference>
<dbReference type="Gene3D" id="1.20.1250.20">
    <property type="entry name" value="MFS general substrate transporter like domains"/>
    <property type="match status" value="2"/>
</dbReference>
<dbReference type="InterPro" id="IPR011701">
    <property type="entry name" value="MFS"/>
</dbReference>
<dbReference type="InterPro" id="IPR020846">
    <property type="entry name" value="MFS_dom"/>
</dbReference>
<dbReference type="InterPro" id="IPR036259">
    <property type="entry name" value="MFS_trans_sf"/>
</dbReference>
<dbReference type="InterPro" id="IPR050327">
    <property type="entry name" value="Proton-linked_MCT"/>
</dbReference>
<dbReference type="PANTHER" id="PTHR11360">
    <property type="entry name" value="MONOCARBOXYLATE TRANSPORTER"/>
    <property type="match status" value="1"/>
</dbReference>
<dbReference type="PANTHER" id="PTHR11360:SF318">
    <property type="entry name" value="MONOCARBOXYLATE TRANSPORTER 12"/>
    <property type="match status" value="1"/>
</dbReference>
<dbReference type="Pfam" id="PF07690">
    <property type="entry name" value="MFS_1"/>
    <property type="match status" value="1"/>
</dbReference>
<dbReference type="SUPFAM" id="SSF103473">
    <property type="entry name" value="MFS general substrate transporter"/>
    <property type="match status" value="1"/>
</dbReference>
<dbReference type="PROSITE" id="PS50850">
    <property type="entry name" value="MFS"/>
    <property type="match status" value="1"/>
</dbReference>
<keyword id="KW-0898">Cataract</keyword>
<keyword id="KW-1003">Cell membrane</keyword>
<keyword id="KW-0225">Disease variant</keyword>
<keyword id="KW-0472">Membrane</keyword>
<keyword id="KW-1267">Proteomics identification</keyword>
<keyword id="KW-1185">Reference proteome</keyword>
<keyword id="KW-0812">Transmembrane</keyword>
<keyword id="KW-1133">Transmembrane helix</keyword>
<accession>Q6ZSM3</accession>
<accession>E9PSF9</accession>
<accession>Q5M9M9</accession>
<accession>Q5T7J2</accession>
<accession>Q6ZV76</accession>
<reference key="1">
    <citation type="journal article" date="2004" name="Nat. Genet.">
        <title>Complete sequencing and characterization of 21,243 full-length human cDNAs.</title>
        <authorList>
            <person name="Ota T."/>
            <person name="Suzuki Y."/>
            <person name="Nishikawa T."/>
            <person name="Otsuki T."/>
            <person name="Sugiyama T."/>
            <person name="Irie R."/>
            <person name="Wakamatsu A."/>
            <person name="Hayashi K."/>
            <person name="Sato H."/>
            <person name="Nagai K."/>
            <person name="Kimura K."/>
            <person name="Makita H."/>
            <person name="Sekine M."/>
            <person name="Obayashi M."/>
            <person name="Nishi T."/>
            <person name="Shibahara T."/>
            <person name="Tanaka T."/>
            <person name="Ishii S."/>
            <person name="Yamamoto J."/>
            <person name="Saito K."/>
            <person name="Kawai Y."/>
            <person name="Isono Y."/>
            <person name="Nakamura Y."/>
            <person name="Nagahari K."/>
            <person name="Murakami K."/>
            <person name="Yasuda T."/>
            <person name="Iwayanagi T."/>
            <person name="Wagatsuma M."/>
            <person name="Shiratori A."/>
            <person name="Sudo H."/>
            <person name="Hosoiri T."/>
            <person name="Kaku Y."/>
            <person name="Kodaira H."/>
            <person name="Kondo H."/>
            <person name="Sugawara M."/>
            <person name="Takahashi M."/>
            <person name="Kanda K."/>
            <person name="Yokoi T."/>
            <person name="Furuya T."/>
            <person name="Kikkawa E."/>
            <person name="Omura Y."/>
            <person name="Abe K."/>
            <person name="Kamihara K."/>
            <person name="Katsuta N."/>
            <person name="Sato K."/>
            <person name="Tanikawa M."/>
            <person name="Yamazaki M."/>
            <person name="Ninomiya K."/>
            <person name="Ishibashi T."/>
            <person name="Yamashita H."/>
            <person name="Murakawa K."/>
            <person name="Fujimori K."/>
            <person name="Tanai H."/>
            <person name="Kimata M."/>
            <person name="Watanabe M."/>
            <person name="Hiraoka S."/>
            <person name="Chiba Y."/>
            <person name="Ishida S."/>
            <person name="Ono Y."/>
            <person name="Takiguchi S."/>
            <person name="Watanabe S."/>
            <person name="Yosida M."/>
            <person name="Hotuta T."/>
            <person name="Kusano J."/>
            <person name="Kanehori K."/>
            <person name="Takahashi-Fujii A."/>
            <person name="Hara H."/>
            <person name="Tanase T.-O."/>
            <person name="Nomura Y."/>
            <person name="Togiya S."/>
            <person name="Komai F."/>
            <person name="Hara R."/>
            <person name="Takeuchi K."/>
            <person name="Arita M."/>
            <person name="Imose N."/>
            <person name="Musashino K."/>
            <person name="Yuuki H."/>
            <person name="Oshima A."/>
            <person name="Sasaki N."/>
            <person name="Aotsuka S."/>
            <person name="Yoshikawa Y."/>
            <person name="Matsunawa H."/>
            <person name="Ichihara T."/>
            <person name="Shiohata N."/>
            <person name="Sano S."/>
            <person name="Moriya S."/>
            <person name="Momiyama H."/>
            <person name="Satoh N."/>
            <person name="Takami S."/>
            <person name="Terashima Y."/>
            <person name="Suzuki O."/>
            <person name="Nakagawa S."/>
            <person name="Senoh A."/>
            <person name="Mizoguchi H."/>
            <person name="Goto Y."/>
            <person name="Shimizu F."/>
            <person name="Wakebe H."/>
            <person name="Hishigaki H."/>
            <person name="Watanabe T."/>
            <person name="Sugiyama A."/>
            <person name="Takemoto M."/>
            <person name="Kawakami B."/>
            <person name="Yamazaki M."/>
            <person name="Watanabe K."/>
            <person name="Kumagai A."/>
            <person name="Itakura S."/>
            <person name="Fukuzumi Y."/>
            <person name="Fujimori Y."/>
            <person name="Komiyama M."/>
            <person name="Tashiro H."/>
            <person name="Tanigami A."/>
            <person name="Fujiwara T."/>
            <person name="Ono T."/>
            <person name="Yamada K."/>
            <person name="Fujii Y."/>
            <person name="Ozaki K."/>
            <person name="Hirao M."/>
            <person name="Ohmori Y."/>
            <person name="Kawabata A."/>
            <person name="Hikiji T."/>
            <person name="Kobatake N."/>
            <person name="Inagaki H."/>
            <person name="Ikema Y."/>
            <person name="Okamoto S."/>
            <person name="Okitani R."/>
            <person name="Kawakami T."/>
            <person name="Noguchi S."/>
            <person name="Itoh T."/>
            <person name="Shigeta K."/>
            <person name="Senba T."/>
            <person name="Matsumura K."/>
            <person name="Nakajima Y."/>
            <person name="Mizuno T."/>
            <person name="Morinaga M."/>
            <person name="Sasaki M."/>
            <person name="Togashi T."/>
            <person name="Oyama M."/>
            <person name="Hata H."/>
            <person name="Watanabe M."/>
            <person name="Komatsu T."/>
            <person name="Mizushima-Sugano J."/>
            <person name="Satoh T."/>
            <person name="Shirai Y."/>
            <person name="Takahashi Y."/>
            <person name="Nakagawa K."/>
            <person name="Okumura K."/>
            <person name="Nagase T."/>
            <person name="Nomura N."/>
            <person name="Kikuchi H."/>
            <person name="Masuho Y."/>
            <person name="Yamashita R."/>
            <person name="Nakai K."/>
            <person name="Yada T."/>
            <person name="Nakamura Y."/>
            <person name="Ohara O."/>
            <person name="Isogai T."/>
            <person name="Sugano S."/>
        </authorList>
    </citation>
    <scope>NUCLEOTIDE SEQUENCE [LARGE SCALE MRNA]</scope>
    <source>
        <tissue>Hippocampus</tissue>
    </source>
</reference>
<reference key="2">
    <citation type="journal article" date="2004" name="Nature">
        <title>The DNA sequence and comparative analysis of human chromosome 10.</title>
        <authorList>
            <person name="Deloukas P."/>
            <person name="Earthrowl M.E."/>
            <person name="Grafham D.V."/>
            <person name="Rubenfield M."/>
            <person name="French L."/>
            <person name="Steward C.A."/>
            <person name="Sims S.K."/>
            <person name="Jones M.C."/>
            <person name="Searle S."/>
            <person name="Scott C."/>
            <person name="Howe K."/>
            <person name="Hunt S.E."/>
            <person name="Andrews T.D."/>
            <person name="Gilbert J.G.R."/>
            <person name="Swarbreck D."/>
            <person name="Ashurst J.L."/>
            <person name="Taylor A."/>
            <person name="Battles J."/>
            <person name="Bird C.P."/>
            <person name="Ainscough R."/>
            <person name="Almeida J.P."/>
            <person name="Ashwell R.I.S."/>
            <person name="Ambrose K.D."/>
            <person name="Babbage A.K."/>
            <person name="Bagguley C.L."/>
            <person name="Bailey J."/>
            <person name="Banerjee R."/>
            <person name="Bates K."/>
            <person name="Beasley H."/>
            <person name="Bray-Allen S."/>
            <person name="Brown A.J."/>
            <person name="Brown J.Y."/>
            <person name="Burford D.C."/>
            <person name="Burrill W."/>
            <person name="Burton J."/>
            <person name="Cahill P."/>
            <person name="Camire D."/>
            <person name="Carter N.P."/>
            <person name="Chapman J.C."/>
            <person name="Clark S.Y."/>
            <person name="Clarke G."/>
            <person name="Clee C.M."/>
            <person name="Clegg S."/>
            <person name="Corby N."/>
            <person name="Coulson A."/>
            <person name="Dhami P."/>
            <person name="Dutta I."/>
            <person name="Dunn M."/>
            <person name="Faulkner L."/>
            <person name="Frankish A."/>
            <person name="Frankland J.A."/>
            <person name="Garner P."/>
            <person name="Garnett J."/>
            <person name="Gribble S."/>
            <person name="Griffiths C."/>
            <person name="Grocock R."/>
            <person name="Gustafson E."/>
            <person name="Hammond S."/>
            <person name="Harley J.L."/>
            <person name="Hart E."/>
            <person name="Heath P.D."/>
            <person name="Ho T.P."/>
            <person name="Hopkins B."/>
            <person name="Horne J."/>
            <person name="Howden P.J."/>
            <person name="Huckle E."/>
            <person name="Hynds C."/>
            <person name="Johnson C."/>
            <person name="Johnson D."/>
            <person name="Kana A."/>
            <person name="Kay M."/>
            <person name="Kimberley A.M."/>
            <person name="Kershaw J.K."/>
            <person name="Kokkinaki M."/>
            <person name="Laird G.K."/>
            <person name="Lawlor S."/>
            <person name="Lee H.M."/>
            <person name="Leongamornlert D.A."/>
            <person name="Laird G."/>
            <person name="Lloyd C."/>
            <person name="Lloyd D.M."/>
            <person name="Loveland J."/>
            <person name="Lovell J."/>
            <person name="McLaren S."/>
            <person name="McLay K.E."/>
            <person name="McMurray A."/>
            <person name="Mashreghi-Mohammadi M."/>
            <person name="Matthews L."/>
            <person name="Milne S."/>
            <person name="Nickerson T."/>
            <person name="Nguyen M."/>
            <person name="Overton-Larty E."/>
            <person name="Palmer S.A."/>
            <person name="Pearce A.V."/>
            <person name="Peck A.I."/>
            <person name="Pelan S."/>
            <person name="Phillimore B."/>
            <person name="Porter K."/>
            <person name="Rice C.M."/>
            <person name="Rogosin A."/>
            <person name="Ross M.T."/>
            <person name="Sarafidou T."/>
            <person name="Sehra H.K."/>
            <person name="Shownkeen R."/>
            <person name="Skuce C.D."/>
            <person name="Smith M."/>
            <person name="Standring L."/>
            <person name="Sycamore N."/>
            <person name="Tester J."/>
            <person name="Thorpe A."/>
            <person name="Torcasso W."/>
            <person name="Tracey A."/>
            <person name="Tromans A."/>
            <person name="Tsolas J."/>
            <person name="Wall M."/>
            <person name="Walsh J."/>
            <person name="Wang H."/>
            <person name="Weinstock K."/>
            <person name="West A.P."/>
            <person name="Willey D.L."/>
            <person name="Whitehead S.L."/>
            <person name="Wilming L."/>
            <person name="Wray P.W."/>
            <person name="Young L."/>
            <person name="Chen Y."/>
            <person name="Lovering R.C."/>
            <person name="Moschonas N.K."/>
            <person name="Siebert R."/>
            <person name="Fechtel K."/>
            <person name="Bentley D."/>
            <person name="Durbin R.M."/>
            <person name="Hubbard T."/>
            <person name="Doucette-Stamm L."/>
            <person name="Beck S."/>
            <person name="Smith D.R."/>
            <person name="Rogers J."/>
        </authorList>
    </citation>
    <scope>NUCLEOTIDE SEQUENCE [LARGE SCALE GENOMIC DNA]</scope>
</reference>
<reference key="3">
    <citation type="journal article" date="2004" name="Genome Res.">
        <title>The status, quality, and expansion of the NIH full-length cDNA project: the Mammalian Gene Collection (MGC).</title>
        <authorList>
            <consortium name="The MGC Project Team"/>
        </authorList>
    </citation>
    <scope>NUCLEOTIDE SEQUENCE [LARGE SCALE MRNA] OF 250-516</scope>
    <source>
        <tissue>Cardiac myocyte</tissue>
        <tissue>Skeletal muscle</tissue>
    </source>
</reference>
<reference key="4">
    <citation type="journal article" date="2008" name="Am. J. Hum. Genet.">
        <title>Mutation of solute carrier SLC16A12 associates with a syndrome combining juvenile cataract with microcornea and renal glucosuria.</title>
        <authorList>
            <person name="Kloeckener-Gruissem B."/>
            <person name="Vandekerckhove K."/>
            <person name="Nuernberg G."/>
            <person name="Neidhardt J."/>
            <person name="Zeitz C."/>
            <person name="Nuernberg P."/>
            <person name="Schipper I."/>
            <person name="Berger W."/>
        </authorList>
    </citation>
    <scope>INVOLVEMENT IN CTRCT47</scope>
    <scope>VARIANT CTRCT47 245-GLN--THR-516 DEL</scope>
    <scope>TISSUE SPECIFICITY</scope>
</reference>
<reference key="5">
    <citation type="journal article" date="2011" name="Invest. Ophthalmol. Vis. Sci.">
        <title>Juvenile cataract-associated mutation of solute carrier SLC16A12 impairs trafficking of the protein to the plasma membrane.</title>
        <authorList>
            <person name="Castorino J.J."/>
            <person name="Gallagher-Colombo S.M."/>
            <person name="Levin A.V."/>
            <person name="Fitzgerald P.G."/>
            <person name="Polishook J."/>
            <person name="Kloeckener-Gruissem B."/>
            <person name="Ostertag E."/>
            <person name="Philp N.J."/>
        </authorList>
    </citation>
    <scope>CHARACTERIZATION OF VARIANT CTRCT47 245-GLN--THR-516 DEL</scope>
    <scope>INTERACTION WITH BSG</scope>
    <scope>SUBCELLULAR LOCATION</scope>
</reference>
<reference key="6">
    <citation type="journal article" date="2013" name="Hum. Mol. Genet.">
        <title>The cataract and glucosuria associated monocarboxylate transporter MCT12 is a new creatine transporter.</title>
        <authorList>
            <person name="Abplanalp J."/>
            <person name="Laczko E."/>
            <person name="Philp N.J."/>
            <person name="Neidhardt J."/>
            <person name="Zuercher J."/>
            <person name="Braun P."/>
            <person name="Schorderet D.F."/>
            <person name="Munier F.L."/>
            <person name="Verrey F."/>
            <person name="Berger W."/>
            <person name="Camargo S.M."/>
            <person name="Kloeckener-Gruissem B."/>
        </authorList>
    </citation>
    <scope>FUNCTION</scope>
    <scope>TRANSPORTER ACTIVITY</scope>
    <scope>BIOPHYSICOCHEMICAL PROPERTIES</scope>
    <scope>SUBCELLULAR LOCATION</scope>
    <scope>VARIANT SER-437</scope>
    <scope>CHARACTERIZATION OF VARIANT SER-437</scope>
    <scope>TISSUE SPECIFICITY</scope>
</reference>
<reference key="7">
    <citation type="journal article" date="2016" name="J. Am. Soc. Nephrol.">
        <title>Mutation in the monocarboxylate transporter 12 gene affects guanidinoacetate excretion but does not cause glucosuria.</title>
        <authorList>
            <person name="Dhayat N."/>
            <person name="Simonin A."/>
            <person name="Anderegg M."/>
            <person name="Pathare G."/>
            <person name="Luescher B.P."/>
            <person name="Deisl C."/>
            <person name="Albano G."/>
            <person name="Mordasini D."/>
            <person name="Hediger M.A."/>
            <person name="Surbek D.V."/>
            <person name="Vogt B."/>
            <person name="Sass J.O."/>
            <person name="Kloeckener-Gruissem B."/>
            <person name="Fuster D.G."/>
        </authorList>
    </citation>
    <scope>FUNCTION</scope>
    <scope>TRANSPORTER ACTIVITY</scope>
</reference>
<reference key="8">
    <citation type="journal article" date="2020" name="Biochem. Biophys. Res. Commun.">
        <title>Molecular characterization of the orphan transporter SLC16A9, an extracellular pH- and Na+-sensitive creatine transporter.</title>
        <authorList>
            <person name="Futagi Y."/>
            <person name="Narumi K."/>
            <person name="Furugen A."/>
            <person name="Kobayashi M."/>
            <person name="Iseki K."/>
        </authorList>
    </citation>
    <scope>FUNCTION</scope>
    <scope>TRANSPORTER ACTIVITY</scope>
    <scope>SUBCELLULAR LOCATION</scope>
    <scope>BIOPHYSICOCHEMICAL PROPERTIES</scope>
    <scope>ACTIVITY REGULATION</scope>
</reference>
<reference key="9">
    <citation type="journal article" date="2020" name="Drug Metab. Pharmacokinet.">
        <title>Functional characterization of monocarboxylate transporter 12 (SLC16A12/MCT12) as a facilitative creatine transporter.</title>
        <authorList>
            <person name="Takahashi M."/>
            <person name="Kishimoto H."/>
            <person name="Shirasaka Y."/>
            <person name="Inoue K."/>
        </authorList>
    </citation>
    <scope>FUNCTION</scope>
    <scope>TRANSPORTER ACTIVITY</scope>
    <scope>MUTAGENESIS OF ARG-67; ASP-95; ASP-329; ASP-360 AND ASP-387</scope>
    <scope>SUBCELLULAR LOCATION</scope>
</reference>
<reference key="10">
    <citation type="journal article" date="2020" name="Biochim. Biophys. Acta">
        <title>Monocarboxylate transporter 12 as a guanidinoacetate efflux transporter in renal proximal tubular epithelial cells.</title>
        <authorList>
            <person name="Jomura R."/>
            <person name="Tanno Y."/>
            <person name="Akanuma S.I."/>
            <person name="Kubo Y."/>
            <person name="Tachikawa M."/>
            <person name="Hosoya K.I."/>
        </authorList>
    </citation>
    <scope>FUNCTION</scope>
    <scope>TRANSPORTER ACTIVITY</scope>
</reference>
<proteinExistence type="evidence at protein level"/>
<organism>
    <name type="scientific">Homo sapiens</name>
    <name type="common">Human</name>
    <dbReference type="NCBI Taxonomy" id="9606"/>
    <lineage>
        <taxon>Eukaryota</taxon>
        <taxon>Metazoa</taxon>
        <taxon>Chordata</taxon>
        <taxon>Craniata</taxon>
        <taxon>Vertebrata</taxon>
        <taxon>Euteleostomi</taxon>
        <taxon>Mammalia</taxon>
        <taxon>Eutheria</taxon>
        <taxon>Euarchontoglires</taxon>
        <taxon>Primates</taxon>
        <taxon>Haplorrhini</taxon>
        <taxon>Catarrhini</taxon>
        <taxon>Hominidae</taxon>
        <taxon>Homo</taxon>
    </lineage>
</organism>
<sequence>MPSGSHWTANSSKIITWLLEQPGKEEKRKTMAKVNRARSTSPPDGGWGWMIVAGCFLVTICTRAVTRCISIFFVEFQTYFTQDYAQTAWIHSIVDCVTMLCAPLGSVVSNHLSCQVGIMLGGLLASTGLILSSFATSLKHLYLTLGVLTGLGFALCYSPAIAMVGKYFSRRKALAYGIAMSGSGIGTFILAPVVQLLIEQFSWRGALLILGGFVLNLCVCGALMRPITLKEDHTTPEQNHVCRTQKEDIKRVSPYSSLTKEWAQTCLCCCLQQEYSFLLMSDFVVLAVSVLFMAYGCSPLFVYLVPYALSVGVSHQQAAFLMSILGVIDIIGNITFGWLTDRRCLKNYQYVCYLFAVGMDGLCYLCLPMLQSLPLLVPFSCTFGYFDGAYVTLIPVVTTEIVGTTSLSSALGVVYFLHAVPYLVSPPIAGRLVDTTGSYTAAFLLCGFSMIFSSVLLGFARLIKRMRKTQLQFIAKESDPKLQLWTNGSVAYSVARELDQKHGEPVATAVPGYSLT</sequence>
<name>MOT12_HUMAN</name>
<gene>
    <name evidence="13" type="primary">SLC16A12</name>
    <name evidence="10" type="synonym">MCT12</name>
</gene>
<comment type="function">
    <text evidence="5 6 7 8 9">Functions as a transporter for creatine and as well for its precursor guanidinoacetate. Transport of creatine and GAA is independent of resting membrane potential and extracellular Na(+), Cl(-), or pH. Contributes to the process of creatine biosynthesis and distribution.</text>
</comment>
<comment type="catalytic activity">
    <reaction evidence="5 6 7 8 9">
        <text>creatine(in) = creatine(out)</text>
        <dbReference type="Rhea" id="RHEA:73043"/>
        <dbReference type="ChEBI" id="CHEBI:57947"/>
    </reaction>
</comment>
<comment type="catalytic activity">
    <reaction evidence="9">
        <text>guanidinoacetate(in) = guanidinoacetate(out)</text>
        <dbReference type="Rhea" id="RHEA:73047"/>
        <dbReference type="ChEBI" id="CHEBI:57742"/>
    </reaction>
</comment>
<comment type="activity regulation">
    <text evidence="5">Creatine uptake is inhibited by carbonyl cyanide 3-chlorophenylhydrazone (CCCP) and by valinomycin.</text>
</comment>
<comment type="biophysicochemical properties">
    <kinetics>
        <KM evidence="5">0.57 mM for creatine</KM>
        <KM evidence="7">0.32 mM for creatine</KM>
    </kinetics>
</comment>
<comment type="subunit">
    <text evidence="4">Interacts with isoform 2 of BSG; this interaction is required for its localization to the plasma membrane.</text>
</comment>
<comment type="interaction">
    <interactant intactId="EBI-17460560">
        <id>Q6ZSM3</id>
    </interactant>
    <interactant intactId="EBI-13059134">
        <id>Q13520</id>
        <label>AQP6</label>
    </interactant>
    <organismsDiffer>false</organismsDiffer>
    <experiments>3</experiments>
</comment>
<comment type="interaction">
    <interactant intactId="EBI-17460560">
        <id>Q6ZSM3</id>
    </interactant>
    <interactant intactId="EBI-7797864">
        <id>P11912</id>
        <label>CD79A</label>
    </interactant>
    <organismsDiffer>false</organismsDiffer>
    <experiments>3</experiments>
</comment>
<comment type="interaction">
    <interactant intactId="EBI-17460560">
        <id>Q6ZSM3</id>
    </interactant>
    <interactant intactId="EBI-12175685">
        <id>Q14802-3</id>
        <label>FXYD3</label>
    </interactant>
    <organismsDiffer>false</organismsDiffer>
    <experiments>3</experiments>
</comment>
<comment type="interaction">
    <interactant intactId="EBI-17460560">
        <id>Q6ZSM3</id>
    </interactant>
    <interactant intactId="EBI-17458373">
        <id>P48165</id>
        <label>GJA8</label>
    </interactant>
    <organismsDiffer>false</organismsDiffer>
    <experiments>3</experiments>
</comment>
<comment type="subcellular location">
    <subcellularLocation>
        <location evidence="4 5 7 8">Cell membrane</location>
        <topology evidence="2">Multi-pass membrane protein</topology>
    </subcellularLocation>
    <subcellularLocation>
        <location evidence="1">Basolateral cell membrane</location>
        <topology evidence="2">Multi-pass membrane protein</topology>
    </subcellularLocation>
    <text evidence="6">Interaction with isoform 2 of BSG is required for its localization to the plasma membrane.</text>
</comment>
<comment type="tissue specificity">
    <text evidence="3 5">Most highly expressed in kidney, followed by retina, lung, heart and testis. Very weakly expressed in brain and liver. Also detected in lens.</text>
</comment>
<comment type="disease" evidence="3 4">
    <disease id="DI-01327">
        <name>Cataract 47</name>
        <acronym>CTRCT47</acronym>
        <description>A form of cataract, an opacification of the crystalline lens of the eye that frequently results in visual impairment or blindness. Opacities vary in morphology, are often confined to a portion of the lens, and may be static or progressive. In general, the more posteriorly located and dense an opacity, the greater the impact on visual function. CTRCT47 is characterized by the association of cataract with microcornea and renal glucosuria. Microcornea is defined by a corneal diameter inferior to 10 mm in both meridians in an otherwise normal eye. Renal glucosuria is defined by elevated glucose level in the urine without hyperglycemia and without evidence of morphological renal anomalies.</description>
        <dbReference type="MIM" id="612018"/>
    </disease>
    <text>The disease is caused by variants affecting the gene represented in this entry.</text>
</comment>
<comment type="similarity">
    <text evidence="12">Belongs to the major facilitator superfamily. Monocarboxylate porter (TC 2.A.1.13) family.</text>
</comment>
<comment type="caution">
    <text evidence="12">It is uncertain whether Met-1 or Met-31 is the initiator.</text>
</comment>
<comment type="sequence caution" evidence="12">
    <conflict type="erroneous initiation">
        <sequence resource="EMBL-CDS" id="BAC85987"/>
    </conflict>
    <text>Truncated N-terminus.</text>
</comment>
<comment type="sequence caution" evidence="12">
    <conflict type="frameshift">
        <sequence resource="EMBL-CDS" id="BAC86925"/>
    </conflict>
</comment>
<protein>
    <recommendedName>
        <fullName evidence="12">Monocarboxylate transporter 12</fullName>
        <shortName evidence="12">MCT 12</shortName>
    </recommendedName>
    <alternativeName>
        <fullName evidence="11">Creatine transporter 2</fullName>
        <shortName evidence="11">CRT2</shortName>
    </alternativeName>
    <alternativeName>
        <fullName evidence="13">Solute carrier family 16 member 12</fullName>
    </alternativeName>
</protein>
<evidence type="ECO:0000250" key="1">
    <source>
        <dbReference type="UniProtKB" id="Q8BGC3"/>
    </source>
</evidence>
<evidence type="ECO:0000255" key="2"/>
<evidence type="ECO:0000269" key="3">
    <source>
    </source>
</evidence>
<evidence type="ECO:0000269" key="4">
    <source>
    </source>
</evidence>
<evidence type="ECO:0000269" key="5">
    <source>
    </source>
</evidence>
<evidence type="ECO:0000269" key="6">
    <source>
    </source>
</evidence>
<evidence type="ECO:0000269" key="7">
    <source>
    </source>
</evidence>
<evidence type="ECO:0000269" key="8">
    <source>
    </source>
</evidence>
<evidence type="ECO:0000269" key="9">
    <source>
    </source>
</evidence>
<evidence type="ECO:0000303" key="10">
    <source>
    </source>
</evidence>
<evidence type="ECO:0000303" key="11">
    <source>
    </source>
</evidence>
<evidence type="ECO:0000305" key="12"/>
<evidence type="ECO:0000312" key="13">
    <source>
        <dbReference type="HGNC" id="HGNC:23094"/>
    </source>
</evidence>
<feature type="chain" id="PRO_0000286675" description="Monocarboxylate transporter 12">
    <location>
        <begin position="1"/>
        <end position="516"/>
    </location>
</feature>
<feature type="topological domain" description="Cytoplasmic" evidence="2">
    <location>
        <begin position="1"/>
        <end position="50"/>
    </location>
</feature>
<feature type="transmembrane region" description="Helical" evidence="2">
    <location>
        <begin position="51"/>
        <end position="73"/>
    </location>
</feature>
<feature type="transmembrane region" description="Helical" evidence="2">
    <location>
        <begin position="88"/>
        <end position="108"/>
    </location>
</feature>
<feature type="transmembrane region" description="Helical" evidence="2">
    <location>
        <begin position="116"/>
        <end position="136"/>
    </location>
</feature>
<feature type="transmembrane region" description="Helical" evidence="2">
    <location>
        <begin position="145"/>
        <end position="165"/>
    </location>
</feature>
<feature type="transmembrane region" description="Helical" evidence="2">
    <location>
        <begin position="178"/>
        <end position="198"/>
    </location>
</feature>
<feature type="transmembrane region" description="Helical" evidence="2">
    <location>
        <begin position="207"/>
        <end position="227"/>
    </location>
</feature>
<feature type="transmembrane region" description="Helical" evidence="2">
    <location>
        <begin position="283"/>
        <end position="303"/>
    </location>
</feature>
<feature type="transmembrane region" description="Helical" evidence="2">
    <location>
        <begin position="319"/>
        <end position="339"/>
    </location>
</feature>
<feature type="transmembrane region" description="Helical" evidence="2">
    <location>
        <begin position="350"/>
        <end position="370"/>
    </location>
</feature>
<feature type="transmembrane region" description="Helical" evidence="2">
    <location>
        <begin position="377"/>
        <end position="397"/>
    </location>
</feature>
<feature type="transmembrane region" description="Helical" evidence="2">
    <location>
        <begin position="410"/>
        <end position="430"/>
    </location>
</feature>
<feature type="transmembrane region" description="Helical" evidence="2">
    <location>
        <begin position="440"/>
        <end position="460"/>
    </location>
</feature>
<feature type="topological domain" description="Cytoplasmic" evidence="2">
    <location>
        <begin position="461"/>
        <end position="516"/>
    </location>
</feature>
<feature type="sequence variant" id="VAR_080957" description="In CTRCT47; loss of localization to the plasma membrane; retained in the endoplasmic reticulum where it undergoes degradation by the proteasome; has no dominant effect on wild-type protein expression and localization." evidence="3">
    <location>
        <begin position="245"/>
        <end position="516"/>
    </location>
</feature>
<feature type="sequence variant" id="VAR_071890" description="Found in a patient with age-related cataract; uncertain significance; decreases creatine transport; dbSNP:rs759863805." evidence="5">
    <original>G</original>
    <variation>S</variation>
    <location>
        <position position="437"/>
    </location>
</feature>
<feature type="mutagenesis site" description="Abolishes creatine efflux activity. Does not affect plasma membrane localization." evidence="8">
    <original>R</original>
    <variation>A</variation>
    <location>
        <position position="67"/>
    </location>
</feature>
<feature type="mutagenesis site" description="Decreases in the creatine efflux activity. Does not affect plasma membrane localization." evidence="8">
    <original>D</original>
    <variation>A</variation>
    <location>
        <position position="95"/>
    </location>
</feature>
<feature type="mutagenesis site" description="Decreases creatine efflux activity. Loss of localization to the plasma membrane." evidence="8">
    <original>D</original>
    <variation>A</variation>
    <location>
        <position position="329"/>
    </location>
</feature>
<feature type="mutagenesis site" description="Does not affect creatine efflux activity. Does not affect plasma membrane localization." evidence="8">
    <original>D</original>
    <variation>A</variation>
    <location>
        <position position="360"/>
    </location>
</feature>
<feature type="mutagenesis site" description="Does not affect creatine efflux activity." evidence="8">
    <original>D</original>
    <variation>A</variation>
    <location>
        <position position="387"/>
    </location>
</feature>
<feature type="sequence conflict" description="In Ref. 1; BAC86925." evidence="12" ref="1">
    <original>I</original>
    <variation>T</variation>
    <location>
        <position position="334"/>
    </location>
</feature>
<feature type="sequence conflict" description="In Ref. 1; BAC85987." evidence="12" ref="1">
    <original>C</original>
    <variation>S</variation>
    <location>
        <position position="363"/>
    </location>
</feature>